<name>RSFR_CHICK</name>
<keyword id="KW-1015">Disulfide bond</keyword>
<keyword id="KW-0255">Endonuclease</keyword>
<keyword id="KW-0378">Hydrolase</keyword>
<keyword id="KW-0540">Nuclease</keyword>
<keyword id="KW-1185">Reference proteome</keyword>
<keyword id="KW-0964">Secreted</keyword>
<keyword id="KW-0732">Signal</keyword>
<reference key="1">
    <citation type="journal article" date="1992" name="Biochem. Biophys. Res. Commun.">
        <title>Isolation of a cDNA clone encoding the RNase-superfamily-related gene highly expressed in chicken bone marrow cells.</title>
        <authorList>
            <person name="Klenova E.M."/>
            <person name="Botezato I."/>
            <person name="Laudet V."/>
            <person name="Goodwin G.H."/>
            <person name="Wallace J.C."/>
            <person name="Lobanenkov V.V."/>
        </authorList>
    </citation>
    <scope>NUCLEOTIDE SEQUENCE [MRNA]</scope>
    <source>
        <tissue>Bone marrow</tissue>
    </source>
</reference>
<accession>P30374</accession>
<proteinExistence type="evidence at transcript level"/>
<organism>
    <name type="scientific">Gallus gallus</name>
    <name type="common">Chicken</name>
    <dbReference type="NCBI Taxonomy" id="9031"/>
    <lineage>
        <taxon>Eukaryota</taxon>
        <taxon>Metazoa</taxon>
        <taxon>Chordata</taxon>
        <taxon>Craniata</taxon>
        <taxon>Vertebrata</taxon>
        <taxon>Euteleostomi</taxon>
        <taxon>Archelosauria</taxon>
        <taxon>Archosauria</taxon>
        <taxon>Dinosauria</taxon>
        <taxon>Saurischia</taxon>
        <taxon>Theropoda</taxon>
        <taxon>Coelurosauria</taxon>
        <taxon>Aves</taxon>
        <taxon>Neognathae</taxon>
        <taxon>Galloanserae</taxon>
        <taxon>Galliformes</taxon>
        <taxon>Phasianidae</taxon>
        <taxon>Phasianinae</taxon>
        <taxon>Gallus</taxon>
    </lineage>
</organism>
<comment type="subcellular location">
    <subcellularLocation>
        <location evidence="2">Secreted</location>
    </subcellularLocation>
</comment>
<comment type="similarity">
    <text evidence="2">Belongs to the pancreatic ribonuclease family.</text>
</comment>
<evidence type="ECO:0000250" key="1"/>
<evidence type="ECO:0000305" key="2"/>
<feature type="signal peptide" evidence="1">
    <location>
        <begin position="1"/>
        <end position="23"/>
    </location>
</feature>
<feature type="chain" id="PRO_0000030860" description="Ribonuclease homolog">
    <location>
        <begin position="24"/>
        <end position="139"/>
    </location>
</feature>
<feature type="active site" description="Proton acceptor" evidence="1">
    <location>
        <position position="34"/>
    </location>
</feature>
<feature type="active site" description="Proton donor" evidence="1">
    <location>
        <position position="133"/>
    </location>
</feature>
<feature type="binding site" evidence="1">
    <location>
        <begin position="65"/>
        <end position="69"/>
    </location>
    <ligand>
        <name>substrate</name>
    </ligand>
</feature>
<feature type="disulfide bond" evidence="1">
    <location>
        <begin position="49"/>
        <end position="102"/>
    </location>
</feature>
<feature type="disulfide bond" evidence="1">
    <location>
        <begin position="64"/>
        <end position="111"/>
    </location>
</feature>
<feature type="disulfide bond" evidence="1">
    <location>
        <begin position="82"/>
        <end position="126"/>
    </location>
</feature>
<dbReference type="EC" id="3.1.27.-"/>
<dbReference type="EMBL" id="X64743">
    <property type="protein sequence ID" value="CAA46006.1"/>
    <property type="molecule type" value="mRNA"/>
</dbReference>
<dbReference type="PIR" id="JH0615">
    <property type="entry name" value="JH0615"/>
</dbReference>
<dbReference type="RefSeq" id="NP_001007943.1">
    <property type="nucleotide sequence ID" value="NM_001007942.2"/>
</dbReference>
<dbReference type="RefSeq" id="XP_046798801.1">
    <property type="nucleotide sequence ID" value="XM_046942845.1"/>
</dbReference>
<dbReference type="SMR" id="P30374"/>
<dbReference type="FunCoup" id="P30374">
    <property type="interactions" value="26"/>
</dbReference>
<dbReference type="STRING" id="9031.ENSGALP00000033366"/>
<dbReference type="PaxDb" id="9031-ENSGALP00000033366"/>
<dbReference type="Ensembl" id="ENSGALT00010020177.1">
    <property type="protein sequence ID" value="ENSGALP00010011725.1"/>
    <property type="gene ID" value="ENSGALG00010008443.1"/>
</dbReference>
<dbReference type="Ensembl" id="ENSGALT00010020178.1">
    <property type="protein sequence ID" value="ENSGALP00010011726.1"/>
    <property type="gene ID" value="ENSGALG00010008443.1"/>
</dbReference>
<dbReference type="GeneID" id="423668"/>
<dbReference type="KEGG" id="gga:423668"/>
<dbReference type="CTD" id="423668"/>
<dbReference type="VEuPathDB" id="HostDB:geneid_423668"/>
<dbReference type="eggNOG" id="ENOG502T1FH">
    <property type="taxonomic scope" value="Eukaryota"/>
</dbReference>
<dbReference type="GeneTree" id="ENSGT00940000166697"/>
<dbReference type="HOGENOM" id="CLU_117006_3_1_1"/>
<dbReference type="InParanoid" id="P30374"/>
<dbReference type="OMA" id="HNYCNRM"/>
<dbReference type="OrthoDB" id="9115204at2759"/>
<dbReference type="Reactome" id="R-GGA-418990">
    <property type="pathway name" value="Adherens junctions interactions"/>
</dbReference>
<dbReference type="Reactome" id="R-GGA-6798695">
    <property type="pathway name" value="Neutrophil degranulation"/>
</dbReference>
<dbReference type="Reactome" id="R-GGA-6803157">
    <property type="pathway name" value="Antimicrobial peptides"/>
</dbReference>
<dbReference type="PRO" id="PR:P30374"/>
<dbReference type="Proteomes" id="UP000000539">
    <property type="component" value="Chromosome 6"/>
</dbReference>
<dbReference type="Bgee" id="ENSGALG00000027165">
    <property type="expression patterns" value="Expressed in spleen and 12 other cell types or tissues"/>
</dbReference>
<dbReference type="GO" id="GO:0005737">
    <property type="term" value="C:cytoplasm"/>
    <property type="evidence" value="ECO:0000314"/>
    <property type="project" value="AgBase"/>
</dbReference>
<dbReference type="GO" id="GO:0005576">
    <property type="term" value="C:extracellular region"/>
    <property type="evidence" value="ECO:0007669"/>
    <property type="project" value="UniProtKB-SubCell"/>
</dbReference>
<dbReference type="GO" id="GO:0004519">
    <property type="term" value="F:endonuclease activity"/>
    <property type="evidence" value="ECO:0007669"/>
    <property type="project" value="UniProtKB-KW"/>
</dbReference>
<dbReference type="GO" id="GO:0003676">
    <property type="term" value="F:nucleic acid binding"/>
    <property type="evidence" value="ECO:0007669"/>
    <property type="project" value="InterPro"/>
</dbReference>
<dbReference type="GO" id="GO:0004540">
    <property type="term" value="F:RNA nuclease activity"/>
    <property type="evidence" value="ECO:0000315"/>
    <property type="project" value="AgBase"/>
</dbReference>
<dbReference type="GO" id="GO:0001525">
    <property type="term" value="P:angiogenesis"/>
    <property type="evidence" value="ECO:0000314"/>
    <property type="project" value="AgBase"/>
</dbReference>
<dbReference type="GO" id="GO:0050829">
    <property type="term" value="P:defense response to Gram-negative bacterium"/>
    <property type="evidence" value="ECO:0000314"/>
    <property type="project" value="AgBase"/>
</dbReference>
<dbReference type="GO" id="GO:0050830">
    <property type="term" value="P:defense response to Gram-positive bacterium"/>
    <property type="evidence" value="ECO:0000314"/>
    <property type="project" value="AgBase"/>
</dbReference>
<dbReference type="CDD" id="cd06265">
    <property type="entry name" value="RNase_A_canonical"/>
    <property type="match status" value="1"/>
</dbReference>
<dbReference type="Gene3D" id="3.10.130.10">
    <property type="entry name" value="Ribonuclease A-like domain"/>
    <property type="match status" value="1"/>
</dbReference>
<dbReference type="InterPro" id="IPR001427">
    <property type="entry name" value="RNaseA"/>
</dbReference>
<dbReference type="InterPro" id="IPR036816">
    <property type="entry name" value="RNaseA-like_dom_sf"/>
</dbReference>
<dbReference type="InterPro" id="IPR023411">
    <property type="entry name" value="RNaseA_AS"/>
</dbReference>
<dbReference type="InterPro" id="IPR023412">
    <property type="entry name" value="RNaseA_domain"/>
</dbReference>
<dbReference type="PANTHER" id="PTHR11437:SF10">
    <property type="entry name" value="ANGIOGENIN-RELATED"/>
    <property type="match status" value="1"/>
</dbReference>
<dbReference type="PANTHER" id="PTHR11437">
    <property type="entry name" value="RIBONUCLEASE"/>
    <property type="match status" value="1"/>
</dbReference>
<dbReference type="Pfam" id="PF00074">
    <property type="entry name" value="RnaseA"/>
    <property type="match status" value="1"/>
</dbReference>
<dbReference type="PRINTS" id="PR00794">
    <property type="entry name" value="RIBONUCLEASE"/>
</dbReference>
<dbReference type="SMART" id="SM00092">
    <property type="entry name" value="RNAse_Pc"/>
    <property type="match status" value="1"/>
</dbReference>
<dbReference type="SUPFAM" id="SSF54076">
    <property type="entry name" value="RNase A-like"/>
    <property type="match status" value="1"/>
</dbReference>
<dbReference type="PROSITE" id="PS00127">
    <property type="entry name" value="RNASE_PANCREATIC"/>
    <property type="match status" value="1"/>
</dbReference>
<protein>
    <recommendedName>
        <fullName>Ribonuclease homolog</fullName>
        <ecNumber>3.1.27.-</ecNumber>
    </recommendedName>
    <alternativeName>
        <fullName>RSFR</fullName>
    </alternativeName>
</protein>
<sequence length="139" mass="15948">MAMSSLWWTAILLLALTVSMCYGVPTYQDFLYKHMDFPKTSFPSNAAYCNVMMVRRGMTAHGRCKSFNTFVHTDPRNLNTLCINQPDQALRTTRRHFRITDCKLIRSHPTCRYSGNQFNRRVRVGCRGGLPVHLDGTSP</sequence>